<reference key="1">
    <citation type="journal article" date="2003" name="Mol. Phylogenet. Evol.">
        <title>Mitochondrial phylogeny of hedgehogs and monophyly of Eulipotyphla.</title>
        <authorList>
            <person name="Nikaido M."/>
            <person name="Cao Y."/>
            <person name="Harada M."/>
            <person name="Okada N."/>
            <person name="Hasegawa M."/>
        </authorList>
    </citation>
    <scope>NUCLEOTIDE SEQUENCE [GENOMIC DNA]</scope>
</reference>
<comment type="function">
    <text evidence="1">Core subunit of the mitochondrial membrane respiratory chain NADH dehydrogenase (Complex I) which catalyzes electron transfer from NADH through the respiratory chain, using ubiquinone as an electron acceptor. Part of the enzyme membrane arm which is embedded in the lipid bilayer and involved in proton translocation.</text>
</comment>
<comment type="catalytic activity">
    <reaction evidence="1">
        <text>a ubiquinone + NADH + 5 H(+)(in) = a ubiquinol + NAD(+) + 4 H(+)(out)</text>
        <dbReference type="Rhea" id="RHEA:29091"/>
        <dbReference type="Rhea" id="RHEA-COMP:9565"/>
        <dbReference type="Rhea" id="RHEA-COMP:9566"/>
        <dbReference type="ChEBI" id="CHEBI:15378"/>
        <dbReference type="ChEBI" id="CHEBI:16389"/>
        <dbReference type="ChEBI" id="CHEBI:17976"/>
        <dbReference type="ChEBI" id="CHEBI:57540"/>
        <dbReference type="ChEBI" id="CHEBI:57945"/>
        <dbReference type="EC" id="7.1.1.2"/>
    </reaction>
    <physiologicalReaction direction="left-to-right" evidence="1">
        <dbReference type="Rhea" id="RHEA:29092"/>
    </physiologicalReaction>
</comment>
<comment type="subunit">
    <text evidence="2">Core subunit of respiratory chain NADH dehydrogenase (Complex I) which is composed of 45 different subunits.</text>
</comment>
<comment type="subcellular location">
    <subcellularLocation>
        <location evidence="2">Mitochondrion inner membrane</location>
        <topology evidence="3">Multi-pass membrane protein</topology>
    </subcellularLocation>
</comment>
<comment type="similarity">
    <text evidence="4">Belongs to the complex I subunit 4L family.</text>
</comment>
<organism>
    <name type="scientific">Hemiechinus auritus</name>
    <name type="common">Long-eared hedgehog</name>
    <dbReference type="NCBI Taxonomy" id="217708"/>
    <lineage>
        <taxon>Eukaryota</taxon>
        <taxon>Metazoa</taxon>
        <taxon>Chordata</taxon>
        <taxon>Craniata</taxon>
        <taxon>Vertebrata</taxon>
        <taxon>Euteleostomi</taxon>
        <taxon>Mammalia</taxon>
        <taxon>Eutheria</taxon>
        <taxon>Laurasiatheria</taxon>
        <taxon>Eulipotyphla</taxon>
        <taxon>Erinaceidae</taxon>
        <taxon>Erinaceinae</taxon>
        <taxon>Hemiechinus</taxon>
    </lineage>
</organism>
<feature type="chain" id="PRO_0000275026" description="NADH-ubiquinone oxidoreductase chain 4L">
    <location>
        <begin position="1"/>
        <end position="98"/>
    </location>
</feature>
<feature type="transmembrane region" description="Helical" evidence="3">
    <location>
        <begin position="1"/>
        <end position="21"/>
    </location>
</feature>
<feature type="transmembrane region" description="Helical" evidence="3">
    <location>
        <begin position="29"/>
        <end position="49"/>
    </location>
</feature>
<feature type="transmembrane region" description="Helical" evidence="3">
    <location>
        <begin position="59"/>
        <end position="79"/>
    </location>
</feature>
<gene>
    <name type="primary">MT-ND4L</name>
    <name type="synonym">MTND4L</name>
    <name type="synonym">NADH4L</name>
    <name type="synonym">ND4L</name>
</gene>
<keyword id="KW-0249">Electron transport</keyword>
<keyword id="KW-0472">Membrane</keyword>
<keyword id="KW-0496">Mitochondrion</keyword>
<keyword id="KW-0999">Mitochondrion inner membrane</keyword>
<keyword id="KW-0520">NAD</keyword>
<keyword id="KW-0679">Respiratory chain</keyword>
<keyword id="KW-1278">Translocase</keyword>
<keyword id="KW-0812">Transmembrane</keyword>
<keyword id="KW-1133">Transmembrane helix</keyword>
<keyword id="KW-0813">Transport</keyword>
<keyword id="KW-0830">Ubiquinone</keyword>
<protein>
    <recommendedName>
        <fullName>NADH-ubiquinone oxidoreductase chain 4L</fullName>
        <ecNumber>7.1.1.2</ecNumber>
    </recommendedName>
    <alternativeName>
        <fullName>NADH dehydrogenase subunit 4L</fullName>
    </alternativeName>
</protein>
<geneLocation type="mitochondrion"/>
<proteinExistence type="inferred from homology"/>
<name>NU4LM_HEMAU</name>
<dbReference type="EC" id="7.1.1.2"/>
<dbReference type="EMBL" id="AB099481">
    <property type="protein sequence ID" value="BAC78856.1"/>
    <property type="molecule type" value="Genomic_DNA"/>
</dbReference>
<dbReference type="RefSeq" id="NP_871756.1">
    <property type="nucleotide sequence ID" value="NC_005033.1"/>
</dbReference>
<dbReference type="SMR" id="Q7Y8G0"/>
<dbReference type="GeneID" id="1482897"/>
<dbReference type="CTD" id="4539"/>
<dbReference type="GO" id="GO:0005743">
    <property type="term" value="C:mitochondrial inner membrane"/>
    <property type="evidence" value="ECO:0000250"/>
    <property type="project" value="UniProtKB"/>
</dbReference>
<dbReference type="GO" id="GO:0045271">
    <property type="term" value="C:respiratory chain complex I"/>
    <property type="evidence" value="ECO:0000250"/>
    <property type="project" value="UniProtKB"/>
</dbReference>
<dbReference type="GO" id="GO:0008137">
    <property type="term" value="F:NADH dehydrogenase (ubiquinone) activity"/>
    <property type="evidence" value="ECO:0000250"/>
    <property type="project" value="UniProtKB"/>
</dbReference>
<dbReference type="GO" id="GO:0042773">
    <property type="term" value="P:ATP synthesis coupled electron transport"/>
    <property type="evidence" value="ECO:0007669"/>
    <property type="project" value="InterPro"/>
</dbReference>
<dbReference type="FunFam" id="1.10.287.3510:FF:000002">
    <property type="entry name" value="NADH-ubiquinone oxidoreductase chain 4L"/>
    <property type="match status" value="1"/>
</dbReference>
<dbReference type="Gene3D" id="1.10.287.3510">
    <property type="match status" value="1"/>
</dbReference>
<dbReference type="InterPro" id="IPR001133">
    <property type="entry name" value="NADH_UbQ_OxRdtase_chain4L/K"/>
</dbReference>
<dbReference type="InterPro" id="IPR039428">
    <property type="entry name" value="NUOK/Mnh_C1-like"/>
</dbReference>
<dbReference type="PANTHER" id="PTHR11434:SF0">
    <property type="entry name" value="NADH-UBIQUINONE OXIDOREDUCTASE CHAIN 4L"/>
    <property type="match status" value="1"/>
</dbReference>
<dbReference type="PANTHER" id="PTHR11434">
    <property type="entry name" value="NADH-UBIQUINONE OXIDOREDUCTASE SUBUNIT ND4L"/>
    <property type="match status" value="1"/>
</dbReference>
<dbReference type="Pfam" id="PF00420">
    <property type="entry name" value="Oxidored_q2"/>
    <property type="match status" value="1"/>
</dbReference>
<evidence type="ECO:0000250" key="1">
    <source>
        <dbReference type="UniProtKB" id="P03901"/>
    </source>
</evidence>
<evidence type="ECO:0000250" key="2">
    <source>
        <dbReference type="UniProtKB" id="P03902"/>
    </source>
</evidence>
<evidence type="ECO:0000255" key="3"/>
<evidence type="ECO:0000305" key="4"/>
<accession>Q7Y8G0</accession>
<sequence length="98" mass="11204">MSIVYMNVMLAFMIALIGTLLYRHHLMSSLMCLEGMMLAMYIFISLISLNMHFTTMYMVPLIILVFAACEAALGLALLVKMFNYYGNDYVQNLNLLKC</sequence>